<name>NDK_TREPS</name>
<evidence type="ECO:0000255" key="1">
    <source>
        <dbReference type="HAMAP-Rule" id="MF_00451"/>
    </source>
</evidence>
<protein>
    <recommendedName>
        <fullName evidence="1">Nucleoside diphosphate kinase</fullName>
        <shortName evidence="1">NDK</shortName>
        <shortName evidence="1">NDP kinase</shortName>
        <ecNumber evidence="1">2.7.4.6</ecNumber>
    </recommendedName>
    <alternativeName>
        <fullName evidence="1">Nucleoside-2-P kinase</fullName>
    </alternativeName>
</protein>
<gene>
    <name evidence="1" type="primary">ndk</name>
    <name type="ordered locus">TPASS_1010</name>
</gene>
<feature type="chain" id="PRO_1000125027" description="Nucleoside diphosphate kinase">
    <location>
        <begin position="1"/>
        <end position="149"/>
    </location>
</feature>
<feature type="active site" description="Pros-phosphohistidine intermediate" evidence="1">
    <location>
        <position position="117"/>
    </location>
</feature>
<feature type="binding site" evidence="1">
    <location>
        <position position="11"/>
    </location>
    <ligand>
        <name>ATP</name>
        <dbReference type="ChEBI" id="CHEBI:30616"/>
    </ligand>
</feature>
<feature type="binding site" evidence="1">
    <location>
        <position position="59"/>
    </location>
    <ligand>
        <name>ATP</name>
        <dbReference type="ChEBI" id="CHEBI:30616"/>
    </ligand>
</feature>
<feature type="binding site" evidence="1">
    <location>
        <position position="87"/>
    </location>
    <ligand>
        <name>ATP</name>
        <dbReference type="ChEBI" id="CHEBI:30616"/>
    </ligand>
</feature>
<feature type="binding site" evidence="1">
    <location>
        <position position="93"/>
    </location>
    <ligand>
        <name>ATP</name>
        <dbReference type="ChEBI" id="CHEBI:30616"/>
    </ligand>
</feature>
<feature type="binding site" evidence="1">
    <location>
        <position position="104"/>
    </location>
    <ligand>
        <name>ATP</name>
        <dbReference type="ChEBI" id="CHEBI:30616"/>
    </ligand>
</feature>
<feature type="binding site" evidence="1">
    <location>
        <position position="114"/>
    </location>
    <ligand>
        <name>ATP</name>
        <dbReference type="ChEBI" id="CHEBI:30616"/>
    </ligand>
</feature>
<comment type="function">
    <text evidence="1">Major role in the synthesis of nucleoside triphosphates other than ATP. The ATP gamma phosphate is transferred to the NDP beta phosphate via a ping-pong mechanism, using a phosphorylated active-site intermediate.</text>
</comment>
<comment type="catalytic activity">
    <reaction evidence="1">
        <text>a 2'-deoxyribonucleoside 5'-diphosphate + ATP = a 2'-deoxyribonucleoside 5'-triphosphate + ADP</text>
        <dbReference type="Rhea" id="RHEA:44640"/>
        <dbReference type="ChEBI" id="CHEBI:30616"/>
        <dbReference type="ChEBI" id="CHEBI:61560"/>
        <dbReference type="ChEBI" id="CHEBI:73316"/>
        <dbReference type="ChEBI" id="CHEBI:456216"/>
        <dbReference type="EC" id="2.7.4.6"/>
    </reaction>
</comment>
<comment type="catalytic activity">
    <reaction evidence="1">
        <text>a ribonucleoside 5'-diphosphate + ATP = a ribonucleoside 5'-triphosphate + ADP</text>
        <dbReference type="Rhea" id="RHEA:18113"/>
        <dbReference type="ChEBI" id="CHEBI:30616"/>
        <dbReference type="ChEBI" id="CHEBI:57930"/>
        <dbReference type="ChEBI" id="CHEBI:61557"/>
        <dbReference type="ChEBI" id="CHEBI:456216"/>
        <dbReference type="EC" id="2.7.4.6"/>
    </reaction>
</comment>
<comment type="cofactor">
    <cofactor evidence="1">
        <name>Mg(2+)</name>
        <dbReference type="ChEBI" id="CHEBI:18420"/>
    </cofactor>
</comment>
<comment type="subunit">
    <text evidence="1">Homotetramer.</text>
</comment>
<comment type="subcellular location">
    <subcellularLocation>
        <location evidence="1">Cytoplasm</location>
    </subcellularLocation>
</comment>
<comment type="similarity">
    <text evidence="1">Belongs to the NDK family.</text>
</comment>
<dbReference type="EC" id="2.7.4.6" evidence="1"/>
<dbReference type="EMBL" id="CP000805">
    <property type="protein sequence ID" value="ACD71426.1"/>
    <property type="molecule type" value="Genomic_DNA"/>
</dbReference>
<dbReference type="RefSeq" id="WP_010882454.1">
    <property type="nucleotide sequence ID" value="NC_021508.1"/>
</dbReference>
<dbReference type="SMR" id="B2S4P7"/>
<dbReference type="GeneID" id="93876757"/>
<dbReference type="KEGG" id="tpp:TPASS_1010"/>
<dbReference type="PATRIC" id="fig|455434.6.peg.998"/>
<dbReference type="Proteomes" id="UP000001202">
    <property type="component" value="Chromosome"/>
</dbReference>
<dbReference type="GO" id="GO:0005737">
    <property type="term" value="C:cytoplasm"/>
    <property type="evidence" value="ECO:0007669"/>
    <property type="project" value="UniProtKB-SubCell"/>
</dbReference>
<dbReference type="GO" id="GO:0005524">
    <property type="term" value="F:ATP binding"/>
    <property type="evidence" value="ECO:0007669"/>
    <property type="project" value="UniProtKB-UniRule"/>
</dbReference>
<dbReference type="GO" id="GO:0046872">
    <property type="term" value="F:metal ion binding"/>
    <property type="evidence" value="ECO:0007669"/>
    <property type="project" value="UniProtKB-KW"/>
</dbReference>
<dbReference type="GO" id="GO:0004550">
    <property type="term" value="F:nucleoside diphosphate kinase activity"/>
    <property type="evidence" value="ECO:0007669"/>
    <property type="project" value="UniProtKB-UniRule"/>
</dbReference>
<dbReference type="GO" id="GO:0006241">
    <property type="term" value="P:CTP biosynthetic process"/>
    <property type="evidence" value="ECO:0007669"/>
    <property type="project" value="UniProtKB-UniRule"/>
</dbReference>
<dbReference type="GO" id="GO:0006183">
    <property type="term" value="P:GTP biosynthetic process"/>
    <property type="evidence" value="ECO:0007669"/>
    <property type="project" value="UniProtKB-UniRule"/>
</dbReference>
<dbReference type="GO" id="GO:0006228">
    <property type="term" value="P:UTP biosynthetic process"/>
    <property type="evidence" value="ECO:0007669"/>
    <property type="project" value="UniProtKB-UniRule"/>
</dbReference>
<dbReference type="CDD" id="cd04413">
    <property type="entry name" value="NDPk_I"/>
    <property type="match status" value="1"/>
</dbReference>
<dbReference type="FunFam" id="3.30.70.141:FF:000003">
    <property type="entry name" value="Nucleoside diphosphate kinase"/>
    <property type="match status" value="1"/>
</dbReference>
<dbReference type="Gene3D" id="3.30.70.141">
    <property type="entry name" value="Nucleoside diphosphate kinase-like domain"/>
    <property type="match status" value="1"/>
</dbReference>
<dbReference type="HAMAP" id="MF_00451">
    <property type="entry name" value="NDP_kinase"/>
    <property type="match status" value="1"/>
</dbReference>
<dbReference type="InterPro" id="IPR034907">
    <property type="entry name" value="NDK-like_dom"/>
</dbReference>
<dbReference type="InterPro" id="IPR036850">
    <property type="entry name" value="NDK-like_dom_sf"/>
</dbReference>
<dbReference type="InterPro" id="IPR001564">
    <property type="entry name" value="Nucleoside_diP_kinase"/>
</dbReference>
<dbReference type="InterPro" id="IPR023005">
    <property type="entry name" value="Nucleoside_diP_kinase_AS"/>
</dbReference>
<dbReference type="NCBIfam" id="NF001908">
    <property type="entry name" value="PRK00668.1"/>
    <property type="match status" value="1"/>
</dbReference>
<dbReference type="PANTHER" id="PTHR11349">
    <property type="entry name" value="NUCLEOSIDE DIPHOSPHATE KINASE"/>
    <property type="match status" value="1"/>
</dbReference>
<dbReference type="Pfam" id="PF00334">
    <property type="entry name" value="NDK"/>
    <property type="match status" value="1"/>
</dbReference>
<dbReference type="PRINTS" id="PR01243">
    <property type="entry name" value="NUCDPKINASE"/>
</dbReference>
<dbReference type="SMART" id="SM00562">
    <property type="entry name" value="NDK"/>
    <property type="match status" value="1"/>
</dbReference>
<dbReference type="SUPFAM" id="SSF54919">
    <property type="entry name" value="Nucleoside diphosphate kinase, NDK"/>
    <property type="match status" value="1"/>
</dbReference>
<dbReference type="PROSITE" id="PS00469">
    <property type="entry name" value="NDPK"/>
    <property type="match status" value="1"/>
</dbReference>
<dbReference type="PROSITE" id="PS51374">
    <property type="entry name" value="NDPK_LIKE"/>
    <property type="match status" value="1"/>
</dbReference>
<organism>
    <name type="scientific">Treponema pallidum subsp. pallidum (strain SS14)</name>
    <dbReference type="NCBI Taxonomy" id="455434"/>
    <lineage>
        <taxon>Bacteria</taxon>
        <taxon>Pseudomonadati</taxon>
        <taxon>Spirochaetota</taxon>
        <taxon>Spirochaetia</taxon>
        <taxon>Spirochaetales</taxon>
        <taxon>Treponemataceae</taxon>
        <taxon>Treponema</taxon>
    </lineage>
</organism>
<keyword id="KW-0067">ATP-binding</keyword>
<keyword id="KW-0963">Cytoplasm</keyword>
<keyword id="KW-0418">Kinase</keyword>
<keyword id="KW-0460">Magnesium</keyword>
<keyword id="KW-0479">Metal-binding</keyword>
<keyword id="KW-0546">Nucleotide metabolism</keyword>
<keyword id="KW-0547">Nucleotide-binding</keyword>
<keyword id="KW-0597">Phosphoprotein</keyword>
<keyword id="KW-0808">Transferase</keyword>
<reference key="1">
    <citation type="journal article" date="2008" name="BMC Microbiol.">
        <title>Complete genome sequence of Treponema pallidum ssp. pallidum strain SS14 determined with oligonucleotide arrays.</title>
        <authorList>
            <person name="Matejkova P."/>
            <person name="Strouhal M."/>
            <person name="Smajs D."/>
            <person name="Norris S.J."/>
            <person name="Palzkill T."/>
            <person name="Petrosino J.F."/>
            <person name="Sodergren E."/>
            <person name="Norton J.E."/>
            <person name="Singh J."/>
            <person name="Richmond T.A."/>
            <person name="Molla M.N."/>
            <person name="Albert T.J."/>
            <person name="Weinstock G.M."/>
        </authorList>
    </citation>
    <scope>NUCLEOTIDE SEQUENCE [LARGE SCALE GENOMIC DNA]</scope>
    <source>
        <strain>SS14</strain>
    </source>
</reference>
<accession>B2S4P7</accession>
<sequence>MAFETTFVMLKPGVLQRRLVGEVLSRFERKGLVLTALRLLCVDTATAELHYAEHREKPFYPSLIAYITSAPVVALAFKGENAISLVRTLCGSTRVEHAQPGTIRGDFALRTTTNIVHASDSPESAARELALYFSAQDFVEWRDGNYDFF</sequence>
<proteinExistence type="inferred from homology"/>